<proteinExistence type="evidence at protein level"/>
<reference key="1">
    <citation type="journal article" date="2011" name="Biochimie">
        <title>Characterisation of a mannose-binding C-type lectin from Oxyuranus scutellatus snake venom.</title>
        <authorList>
            <person name="Earl S.T."/>
            <person name="Robson J."/>
            <person name="Trabi M."/>
            <person name="de Jersey J."/>
            <person name="Masci P.P."/>
            <person name="Lavin M.F."/>
        </authorList>
    </citation>
    <scope>NUCLEOTIDE SEQUENCE [MRNA]</scope>
    <scope>FUNCTION</scope>
    <scope>SUBUNIT</scope>
    <source>
        <tissue>Venom</tissue>
        <tissue>Venom gland</tissue>
    </source>
</reference>
<accession>D2YVH7</accession>
<sequence length="158" mass="18345">MGRFLLVTLSLLVGAFSLNEANSCCCPQDWLPKNGFCYKVFNDHKNWNDAEMFCRKFKPGCHLASIHSNADSADLAEYVSDYLKSDGNVWIGLNDPRKQRTWVWSDRSPTNYYSWNRGEPNNSKNNEYCVHLWALSGYLKWNDTPCKALYSFICQCRF</sequence>
<organism>
    <name type="scientific">Oxyuranus scutellatus</name>
    <name type="common">Coastal taipan</name>
    <dbReference type="NCBI Taxonomy" id="8668"/>
    <lineage>
        <taxon>Eukaryota</taxon>
        <taxon>Metazoa</taxon>
        <taxon>Chordata</taxon>
        <taxon>Craniata</taxon>
        <taxon>Vertebrata</taxon>
        <taxon>Euteleostomi</taxon>
        <taxon>Lepidosauria</taxon>
        <taxon>Squamata</taxon>
        <taxon>Bifurcata</taxon>
        <taxon>Unidentata</taxon>
        <taxon>Episquamata</taxon>
        <taxon>Toxicofera</taxon>
        <taxon>Serpentes</taxon>
        <taxon>Colubroidea</taxon>
        <taxon>Elapidae</taxon>
        <taxon>Hydrophiinae</taxon>
        <taxon>Oxyuranus</taxon>
    </lineage>
</organism>
<keyword id="KW-0106">Calcium</keyword>
<keyword id="KW-1015">Disulfide bond</keyword>
<keyword id="KW-0325">Glycoprotein</keyword>
<keyword id="KW-0348">Hemagglutinin</keyword>
<keyword id="KW-0430">Lectin</keyword>
<keyword id="KW-0479">Metal-binding</keyword>
<keyword id="KW-0964">Secreted</keyword>
<keyword id="KW-0732">Signal</keyword>
<name>LECM_OXYSU</name>
<evidence type="ECO:0000250" key="1"/>
<evidence type="ECO:0000255" key="2"/>
<evidence type="ECO:0000255" key="3">
    <source>
        <dbReference type="PROSITE-ProRule" id="PRU00040"/>
    </source>
</evidence>
<evidence type="ECO:0000269" key="4">
    <source>
    </source>
</evidence>
<evidence type="ECO:0000305" key="5"/>
<comment type="function">
    <text evidence="4">Mannose-binding lectin that binds to and agglutinates rabbit (but not human) erythrocytes in a calcium-dependent manner.</text>
</comment>
<comment type="subunit">
    <text evidence="4">Dimer. Probably disulfide-linked homodimer.</text>
</comment>
<comment type="subcellular location">
    <subcellularLocation>
        <location>Secreted</location>
    </subcellularLocation>
</comment>
<comment type="tissue specificity">
    <text>Expressed by the venom gland.</text>
</comment>
<comment type="similarity">
    <text evidence="5">Belongs to the true venom lectin family.</text>
</comment>
<protein>
    <recommendedName>
        <fullName>C-type lectin mannose-binding isoform</fullName>
        <shortName>CTL</shortName>
    </recommendedName>
    <alternativeName>
        <fullName>Venom C-type lectin mannose-binding isoform 1</fullName>
    </alternativeName>
</protein>
<dbReference type="EMBL" id="EF194719">
    <property type="protein sequence ID" value="ABP94092.1"/>
    <property type="molecule type" value="mRNA"/>
</dbReference>
<dbReference type="SMR" id="D2YVH7"/>
<dbReference type="GO" id="GO:0005576">
    <property type="term" value="C:extracellular region"/>
    <property type="evidence" value="ECO:0007669"/>
    <property type="project" value="UniProtKB-SubCell"/>
</dbReference>
<dbReference type="GO" id="GO:0030246">
    <property type="term" value="F:carbohydrate binding"/>
    <property type="evidence" value="ECO:0007669"/>
    <property type="project" value="UniProtKB-KW"/>
</dbReference>
<dbReference type="GO" id="GO:0046872">
    <property type="term" value="F:metal ion binding"/>
    <property type="evidence" value="ECO:0007669"/>
    <property type="project" value="UniProtKB-KW"/>
</dbReference>
<dbReference type="CDD" id="cd03594">
    <property type="entry name" value="CLECT_REG-1_like"/>
    <property type="match status" value="1"/>
</dbReference>
<dbReference type="FunFam" id="3.10.100.10:FF:000015">
    <property type="entry name" value="C-type lectin Cal"/>
    <property type="match status" value="1"/>
</dbReference>
<dbReference type="Gene3D" id="3.10.100.10">
    <property type="entry name" value="Mannose-Binding Protein A, subunit A"/>
    <property type="match status" value="1"/>
</dbReference>
<dbReference type="InterPro" id="IPR001304">
    <property type="entry name" value="C-type_lectin-like"/>
</dbReference>
<dbReference type="InterPro" id="IPR016186">
    <property type="entry name" value="C-type_lectin-like/link_sf"/>
</dbReference>
<dbReference type="InterPro" id="IPR050111">
    <property type="entry name" value="C-type_lectin/snaclec_domain"/>
</dbReference>
<dbReference type="InterPro" id="IPR018378">
    <property type="entry name" value="C-type_lectin_CS"/>
</dbReference>
<dbReference type="InterPro" id="IPR016187">
    <property type="entry name" value="CTDL_fold"/>
</dbReference>
<dbReference type="PANTHER" id="PTHR22803">
    <property type="entry name" value="MANNOSE, PHOSPHOLIPASE, LECTIN RECEPTOR RELATED"/>
    <property type="match status" value="1"/>
</dbReference>
<dbReference type="Pfam" id="PF00059">
    <property type="entry name" value="Lectin_C"/>
    <property type="match status" value="1"/>
</dbReference>
<dbReference type="PRINTS" id="PR01504">
    <property type="entry name" value="PNCREATITSAP"/>
</dbReference>
<dbReference type="SMART" id="SM00034">
    <property type="entry name" value="CLECT"/>
    <property type="match status" value="1"/>
</dbReference>
<dbReference type="SUPFAM" id="SSF56436">
    <property type="entry name" value="C-type lectin-like"/>
    <property type="match status" value="1"/>
</dbReference>
<dbReference type="PROSITE" id="PS00615">
    <property type="entry name" value="C_TYPE_LECTIN_1"/>
    <property type="match status" value="1"/>
</dbReference>
<dbReference type="PROSITE" id="PS50041">
    <property type="entry name" value="C_TYPE_LECTIN_2"/>
    <property type="match status" value="1"/>
</dbReference>
<feature type="signal peptide" evidence="2">
    <location>
        <begin position="1"/>
        <end position="23"/>
    </location>
</feature>
<feature type="chain" id="PRO_0000422547" description="C-type lectin mannose-binding isoform">
    <location>
        <begin position="24"/>
        <end position="158"/>
    </location>
</feature>
<feature type="domain" description="C-type lectin" evidence="3">
    <location>
        <begin position="33"/>
        <end position="155"/>
    </location>
</feature>
<feature type="short sequence motif" description="Mannose-binding">
    <location>
        <begin position="119"/>
        <end position="121"/>
    </location>
</feature>
<feature type="binding site" evidence="1">
    <location>
        <position position="127"/>
    </location>
    <ligand>
        <name>Ca(2+)</name>
        <dbReference type="ChEBI" id="CHEBI:29108"/>
    </ligand>
</feature>
<feature type="binding site" evidence="1">
    <location>
        <position position="142"/>
    </location>
    <ligand>
        <name>Ca(2+)</name>
        <dbReference type="ChEBI" id="CHEBI:29108"/>
    </ligand>
</feature>
<feature type="binding site" evidence="1">
    <location>
        <position position="143"/>
    </location>
    <ligand>
        <name>Ca(2+)</name>
        <dbReference type="ChEBI" id="CHEBI:29108"/>
    </ligand>
</feature>
<feature type="glycosylation site" description="N-linked (GlcNAc...) asparagine" evidence="2">
    <location>
        <position position="121"/>
    </location>
</feature>
<feature type="disulfide bond" evidence="3">
    <location>
        <begin position="26"/>
        <end position="37"/>
    </location>
</feature>
<feature type="disulfide bond" evidence="3">
    <location>
        <begin position="54"/>
        <end position="154"/>
    </location>
</feature>
<feature type="disulfide bond" evidence="3">
    <location>
        <begin position="61"/>
        <end position="156"/>
    </location>
</feature>
<feature type="disulfide bond" evidence="3">
    <location>
        <begin position="129"/>
        <end position="146"/>
    </location>
</feature>